<keyword id="KW-0040">ANK repeat</keyword>
<keyword id="KW-0175">Coiled coil</keyword>
<keyword id="KW-0677">Repeat</keyword>
<evidence type="ECO:0000255" key="1"/>
<organism>
    <name type="scientific">Rickettsia bellii (strain RML369-C)</name>
    <dbReference type="NCBI Taxonomy" id="336407"/>
    <lineage>
        <taxon>Bacteria</taxon>
        <taxon>Pseudomonadati</taxon>
        <taxon>Pseudomonadota</taxon>
        <taxon>Alphaproteobacteria</taxon>
        <taxon>Rickettsiales</taxon>
        <taxon>Rickettsiaceae</taxon>
        <taxon>Rickettsieae</taxon>
        <taxon>Rickettsia</taxon>
        <taxon>belli group</taxon>
    </lineage>
</organism>
<protein>
    <recommendedName>
        <fullName>Putative ankyrin repeat protein RBE_0984</fullName>
    </recommendedName>
</protein>
<dbReference type="EMBL" id="CP000087">
    <property type="protein sequence ID" value="ABE05065.1"/>
    <property type="molecule type" value="Genomic_DNA"/>
</dbReference>
<dbReference type="RefSeq" id="WP_011477645.1">
    <property type="nucleotide sequence ID" value="NC_007940.1"/>
</dbReference>
<dbReference type="SMR" id="Q1RHU9"/>
<dbReference type="KEGG" id="rbe:RBE_0984"/>
<dbReference type="HOGENOM" id="CLU_647020_0_0_5"/>
<dbReference type="Proteomes" id="UP000001951">
    <property type="component" value="Chromosome"/>
</dbReference>
<dbReference type="Gene3D" id="1.25.40.20">
    <property type="entry name" value="Ankyrin repeat-containing domain"/>
    <property type="match status" value="2"/>
</dbReference>
<dbReference type="InterPro" id="IPR002110">
    <property type="entry name" value="Ankyrin_rpt"/>
</dbReference>
<dbReference type="InterPro" id="IPR036770">
    <property type="entry name" value="Ankyrin_rpt-contain_sf"/>
</dbReference>
<dbReference type="PANTHER" id="PTHR24198">
    <property type="entry name" value="ANKYRIN REPEAT AND PROTEIN KINASE DOMAIN-CONTAINING PROTEIN"/>
    <property type="match status" value="1"/>
</dbReference>
<dbReference type="PANTHER" id="PTHR24198:SF165">
    <property type="entry name" value="ANKYRIN REPEAT-CONTAINING PROTEIN-RELATED"/>
    <property type="match status" value="1"/>
</dbReference>
<dbReference type="SMART" id="SM00248">
    <property type="entry name" value="ANK"/>
    <property type="match status" value="5"/>
</dbReference>
<dbReference type="SUPFAM" id="SSF48403">
    <property type="entry name" value="Ankyrin repeat"/>
    <property type="match status" value="1"/>
</dbReference>
<feature type="chain" id="PRO_0000280920" description="Putative ankyrin repeat protein RBE_0984">
    <location>
        <begin position="1"/>
        <end position="387"/>
    </location>
</feature>
<feature type="repeat" description="ANK 1">
    <location>
        <begin position="50"/>
        <end position="79"/>
    </location>
</feature>
<feature type="repeat" description="ANK 2">
    <location>
        <begin position="88"/>
        <end position="119"/>
    </location>
</feature>
<feature type="repeat" description="ANK 3">
    <location>
        <begin position="123"/>
        <end position="154"/>
    </location>
</feature>
<feature type="repeat" description="ANK 4">
    <location>
        <begin position="159"/>
        <end position="188"/>
    </location>
</feature>
<feature type="repeat" description="ANK 5">
    <location>
        <begin position="210"/>
        <end position="239"/>
    </location>
</feature>
<feature type="coiled-coil region" evidence="1">
    <location>
        <begin position="251"/>
        <end position="278"/>
    </location>
</feature>
<feature type="coiled-coil region" evidence="1">
    <location>
        <begin position="311"/>
        <end position="352"/>
    </location>
</feature>
<proteinExistence type="predicted"/>
<reference key="1">
    <citation type="journal article" date="2006" name="PLoS Genet.">
        <title>Genome sequence of Rickettsia bellii illuminates the role of amoebae in gene exchanges between intracellular pathogens.</title>
        <authorList>
            <person name="Ogata H."/>
            <person name="La Scola B."/>
            <person name="Audic S."/>
            <person name="Renesto P."/>
            <person name="Blanc G."/>
            <person name="Robert C."/>
            <person name="Fournier P.-E."/>
            <person name="Claverie J.-M."/>
            <person name="Raoult D."/>
        </authorList>
    </citation>
    <scope>NUCLEOTIDE SEQUENCE [LARGE SCALE GENOMIC DNA]</scope>
    <source>
        <strain>RML369-C</strain>
    </source>
</reference>
<accession>Q1RHU9</accession>
<gene>
    <name type="ordered locus">RBE_0984</name>
</gene>
<name>Y984_RICBR</name>
<sequence length="387" mass="43731">MFAFFRSSSNEPDGTLYNKLIEAIKSRNSLEVLALIPKMKNEELAKPNIYGNTPLSLALNKKLEAVCEVLVSRMSDKDISIIETYVEHRETYFTLAAIKGFKGVCENLAPRMSNEAINVINARKHTALTLAADKNLPQVCIKLIPIMFDEVINVTENRHKDSALRKAIWNDLDVVCQMLIPVTSKENINYIDVSDRTLLILAAQKGMKVVCKMLISRMIEDNSLDIINHVISKGELKGESALSLAEKQKGFEDICELLQKSHEEYKEQKQKENEKKCEESQPKKIISEDINKLLNELKDGAYNNKNIIEFSISAKIEKLEKNANDLSEIYTNIQDIINHNKNTKAKLLALEKHLNQIIDAQTINTEQQISLEALGDVSVEFSNSRGV</sequence>